<sequence>MEVTDVRLRRVNTDGRMRAIASITLDHEFVVHDIRVIDGNNGLFVAMPSKRTPDGEFRDIAHPINSSTRGKIQDAVLNEYHRLGEEEETIEYEEAGAS</sequence>
<feature type="chain" id="PRO_1000062422" description="Putative septation protein SpoVG">
    <location>
        <begin position="1"/>
        <end position="98"/>
    </location>
</feature>
<dbReference type="EMBL" id="CP000813">
    <property type="protein sequence ID" value="ABV60733.1"/>
    <property type="molecule type" value="Genomic_DNA"/>
</dbReference>
<dbReference type="RefSeq" id="WP_008357439.1">
    <property type="nucleotide sequence ID" value="NZ_VEIS01000022.1"/>
</dbReference>
<dbReference type="SMR" id="A8F916"/>
<dbReference type="STRING" id="315750.BPUM_0033"/>
<dbReference type="GeneID" id="66361650"/>
<dbReference type="KEGG" id="bpu:BPUM_0033"/>
<dbReference type="eggNOG" id="COG2088">
    <property type="taxonomic scope" value="Bacteria"/>
</dbReference>
<dbReference type="HOGENOM" id="CLU_103669_2_1_9"/>
<dbReference type="OrthoDB" id="9796286at2"/>
<dbReference type="Proteomes" id="UP000001355">
    <property type="component" value="Chromosome"/>
</dbReference>
<dbReference type="GO" id="GO:0030436">
    <property type="term" value="P:asexual sporulation"/>
    <property type="evidence" value="ECO:0007669"/>
    <property type="project" value="UniProtKB-UniRule"/>
</dbReference>
<dbReference type="GO" id="GO:0000917">
    <property type="term" value="P:division septum assembly"/>
    <property type="evidence" value="ECO:0007669"/>
    <property type="project" value="UniProtKB-KW"/>
</dbReference>
<dbReference type="GO" id="GO:0030435">
    <property type="term" value="P:sporulation resulting in formation of a cellular spore"/>
    <property type="evidence" value="ECO:0007669"/>
    <property type="project" value="UniProtKB-KW"/>
</dbReference>
<dbReference type="FunFam" id="3.30.1120.40:FF:000001">
    <property type="entry name" value="Putative septation protein SpoVG"/>
    <property type="match status" value="1"/>
</dbReference>
<dbReference type="Gene3D" id="3.30.1120.40">
    <property type="entry name" value="Stage V sporulation protein G"/>
    <property type="match status" value="1"/>
</dbReference>
<dbReference type="HAMAP" id="MF_00819">
    <property type="entry name" value="SpoVG"/>
    <property type="match status" value="1"/>
</dbReference>
<dbReference type="InterPro" id="IPR007170">
    <property type="entry name" value="SpoVG"/>
</dbReference>
<dbReference type="InterPro" id="IPR036751">
    <property type="entry name" value="SpoVG_sf"/>
</dbReference>
<dbReference type="NCBIfam" id="NF009749">
    <property type="entry name" value="PRK13259.1"/>
    <property type="match status" value="1"/>
</dbReference>
<dbReference type="PANTHER" id="PTHR38429">
    <property type="entry name" value="SEPTATION PROTEIN SPOVG-RELATED"/>
    <property type="match status" value="1"/>
</dbReference>
<dbReference type="PANTHER" id="PTHR38429:SF1">
    <property type="entry name" value="SEPTATION PROTEIN SPOVG-RELATED"/>
    <property type="match status" value="1"/>
</dbReference>
<dbReference type="Pfam" id="PF04026">
    <property type="entry name" value="SpoVG"/>
    <property type="match status" value="1"/>
</dbReference>
<dbReference type="SUPFAM" id="SSF160537">
    <property type="entry name" value="SpoVG-like"/>
    <property type="match status" value="1"/>
</dbReference>
<protein>
    <recommendedName>
        <fullName evidence="1">Putative septation protein SpoVG</fullName>
    </recommendedName>
    <alternativeName>
        <fullName evidence="1">Stage V sporulation protein G</fullName>
    </alternativeName>
</protein>
<evidence type="ECO:0000255" key="1">
    <source>
        <dbReference type="HAMAP-Rule" id="MF_00819"/>
    </source>
</evidence>
<keyword id="KW-0131">Cell cycle</keyword>
<keyword id="KW-0132">Cell division</keyword>
<keyword id="KW-0717">Septation</keyword>
<keyword id="KW-0749">Sporulation</keyword>
<reference key="1">
    <citation type="journal article" date="2007" name="PLoS ONE">
        <title>Paradoxical DNA repair and peroxide resistance gene conservation in Bacillus pumilus SAFR-032.</title>
        <authorList>
            <person name="Gioia J."/>
            <person name="Yerrapragada S."/>
            <person name="Qin X."/>
            <person name="Jiang H."/>
            <person name="Igboeli O.C."/>
            <person name="Muzny D."/>
            <person name="Dugan-Rocha S."/>
            <person name="Ding Y."/>
            <person name="Hawes A."/>
            <person name="Liu W."/>
            <person name="Perez L."/>
            <person name="Kovar C."/>
            <person name="Dinh H."/>
            <person name="Lee S."/>
            <person name="Nazareth L."/>
            <person name="Blyth P."/>
            <person name="Holder M."/>
            <person name="Buhay C."/>
            <person name="Tirumalai M.R."/>
            <person name="Liu Y."/>
            <person name="Dasgupta I."/>
            <person name="Bokhetache L."/>
            <person name="Fujita M."/>
            <person name="Karouia F."/>
            <person name="Eswara Moorthy P."/>
            <person name="Siefert J."/>
            <person name="Uzman A."/>
            <person name="Buzumbo P."/>
            <person name="Verma A."/>
            <person name="Zwiya H."/>
            <person name="McWilliams B.D."/>
            <person name="Olowu A."/>
            <person name="Clinkenbeard K.D."/>
            <person name="Newcombe D."/>
            <person name="Golebiewski L."/>
            <person name="Petrosino J.F."/>
            <person name="Nicholson W.L."/>
            <person name="Fox G.E."/>
            <person name="Venkateswaran K."/>
            <person name="Highlander S.K."/>
            <person name="Weinstock G.M."/>
        </authorList>
    </citation>
    <scope>NUCLEOTIDE SEQUENCE [LARGE SCALE GENOMIC DNA]</scope>
    <source>
        <strain>SAFR-032</strain>
    </source>
</reference>
<name>SP5G_BACP2</name>
<accession>A8F916</accession>
<gene>
    <name evidence="1" type="primary">spoVG</name>
    <name type="ordered locus">BPUM_0033</name>
</gene>
<organism>
    <name type="scientific">Bacillus pumilus (strain SAFR-032)</name>
    <dbReference type="NCBI Taxonomy" id="315750"/>
    <lineage>
        <taxon>Bacteria</taxon>
        <taxon>Bacillati</taxon>
        <taxon>Bacillota</taxon>
        <taxon>Bacilli</taxon>
        <taxon>Bacillales</taxon>
        <taxon>Bacillaceae</taxon>
        <taxon>Bacillus</taxon>
    </lineage>
</organism>
<proteinExistence type="inferred from homology"/>
<comment type="function">
    <text evidence="1">Essential for sporulation. Interferes with or is a negative regulator of the pathway leading to asymmetric septation.</text>
</comment>
<comment type="similarity">
    <text evidence="1">Belongs to the SpoVG family.</text>
</comment>